<dbReference type="EC" id="2.7.7.6" evidence="1"/>
<dbReference type="EMBL" id="AM180252">
    <property type="protein sequence ID" value="CAJ54959.1"/>
    <property type="molecule type" value="Genomic_DNA"/>
</dbReference>
<dbReference type="RefSeq" id="WP_011526988.1">
    <property type="nucleotide sequence ID" value="NC_008011.1"/>
</dbReference>
<dbReference type="SMR" id="Q1MPW8"/>
<dbReference type="STRING" id="363253.LI0905"/>
<dbReference type="KEGG" id="lip:LI0905"/>
<dbReference type="eggNOG" id="COG0085">
    <property type="taxonomic scope" value="Bacteria"/>
</dbReference>
<dbReference type="HOGENOM" id="CLU_000524_4_0_7"/>
<dbReference type="OrthoDB" id="9803954at2"/>
<dbReference type="Proteomes" id="UP000002430">
    <property type="component" value="Chromosome"/>
</dbReference>
<dbReference type="GO" id="GO:0000428">
    <property type="term" value="C:DNA-directed RNA polymerase complex"/>
    <property type="evidence" value="ECO:0007669"/>
    <property type="project" value="UniProtKB-KW"/>
</dbReference>
<dbReference type="GO" id="GO:0003677">
    <property type="term" value="F:DNA binding"/>
    <property type="evidence" value="ECO:0007669"/>
    <property type="project" value="UniProtKB-UniRule"/>
</dbReference>
<dbReference type="GO" id="GO:0003899">
    <property type="term" value="F:DNA-directed RNA polymerase activity"/>
    <property type="evidence" value="ECO:0007669"/>
    <property type="project" value="UniProtKB-UniRule"/>
</dbReference>
<dbReference type="GO" id="GO:0032549">
    <property type="term" value="F:ribonucleoside binding"/>
    <property type="evidence" value="ECO:0007669"/>
    <property type="project" value="InterPro"/>
</dbReference>
<dbReference type="GO" id="GO:0006351">
    <property type="term" value="P:DNA-templated transcription"/>
    <property type="evidence" value="ECO:0007669"/>
    <property type="project" value="UniProtKB-UniRule"/>
</dbReference>
<dbReference type="CDD" id="cd00653">
    <property type="entry name" value="RNA_pol_B_RPB2"/>
    <property type="match status" value="1"/>
</dbReference>
<dbReference type="FunFam" id="3.90.1800.10:FF:000001">
    <property type="entry name" value="DNA-directed RNA polymerase subunit beta"/>
    <property type="match status" value="1"/>
</dbReference>
<dbReference type="Gene3D" id="2.40.50.100">
    <property type="match status" value="1"/>
</dbReference>
<dbReference type="Gene3D" id="2.40.50.150">
    <property type="match status" value="1"/>
</dbReference>
<dbReference type="Gene3D" id="3.90.1100.10">
    <property type="match status" value="2"/>
</dbReference>
<dbReference type="Gene3D" id="2.30.150.10">
    <property type="entry name" value="DNA-directed RNA polymerase, beta subunit, external 1 domain"/>
    <property type="match status" value="1"/>
</dbReference>
<dbReference type="Gene3D" id="2.40.270.10">
    <property type="entry name" value="DNA-directed RNA polymerase, subunit 2, domain 6"/>
    <property type="match status" value="1"/>
</dbReference>
<dbReference type="Gene3D" id="3.90.1800.10">
    <property type="entry name" value="RNA polymerase alpha subunit dimerisation domain"/>
    <property type="match status" value="1"/>
</dbReference>
<dbReference type="Gene3D" id="3.90.1110.10">
    <property type="entry name" value="RNA polymerase Rpb2, domain 2"/>
    <property type="match status" value="2"/>
</dbReference>
<dbReference type="HAMAP" id="MF_01321">
    <property type="entry name" value="RNApol_bact_RpoB"/>
    <property type="match status" value="1"/>
</dbReference>
<dbReference type="InterPro" id="IPR042107">
    <property type="entry name" value="DNA-dir_RNA_pol_bsu_ext_1_sf"/>
</dbReference>
<dbReference type="InterPro" id="IPR019462">
    <property type="entry name" value="DNA-dir_RNA_pol_bsu_external_1"/>
</dbReference>
<dbReference type="InterPro" id="IPR015712">
    <property type="entry name" value="DNA-dir_RNA_pol_su2"/>
</dbReference>
<dbReference type="InterPro" id="IPR007120">
    <property type="entry name" value="DNA-dir_RNAP_su2_dom"/>
</dbReference>
<dbReference type="InterPro" id="IPR037033">
    <property type="entry name" value="DNA-dir_RNAP_su2_hyb_sf"/>
</dbReference>
<dbReference type="InterPro" id="IPR010243">
    <property type="entry name" value="RNA_pol_bsu_bac"/>
</dbReference>
<dbReference type="InterPro" id="IPR007121">
    <property type="entry name" value="RNA_pol_bsu_CS"/>
</dbReference>
<dbReference type="InterPro" id="IPR007644">
    <property type="entry name" value="RNA_pol_bsu_protrusion"/>
</dbReference>
<dbReference type="InterPro" id="IPR007642">
    <property type="entry name" value="RNA_pol_Rpb2_2"/>
</dbReference>
<dbReference type="InterPro" id="IPR037034">
    <property type="entry name" value="RNA_pol_Rpb2_2_sf"/>
</dbReference>
<dbReference type="InterPro" id="IPR007645">
    <property type="entry name" value="RNA_pol_Rpb2_3"/>
</dbReference>
<dbReference type="InterPro" id="IPR007641">
    <property type="entry name" value="RNA_pol_Rpb2_7"/>
</dbReference>
<dbReference type="InterPro" id="IPR014724">
    <property type="entry name" value="RNA_pol_RPB2_OB-fold"/>
</dbReference>
<dbReference type="NCBIfam" id="NF001616">
    <property type="entry name" value="PRK00405.1"/>
    <property type="match status" value="1"/>
</dbReference>
<dbReference type="NCBIfam" id="TIGR02013">
    <property type="entry name" value="rpoB"/>
    <property type="match status" value="1"/>
</dbReference>
<dbReference type="PANTHER" id="PTHR20856">
    <property type="entry name" value="DNA-DIRECTED RNA POLYMERASE I SUBUNIT 2"/>
    <property type="match status" value="1"/>
</dbReference>
<dbReference type="Pfam" id="PF04563">
    <property type="entry name" value="RNA_pol_Rpb2_1"/>
    <property type="match status" value="1"/>
</dbReference>
<dbReference type="Pfam" id="PF04561">
    <property type="entry name" value="RNA_pol_Rpb2_2"/>
    <property type="match status" value="2"/>
</dbReference>
<dbReference type="Pfam" id="PF04565">
    <property type="entry name" value="RNA_pol_Rpb2_3"/>
    <property type="match status" value="1"/>
</dbReference>
<dbReference type="Pfam" id="PF10385">
    <property type="entry name" value="RNA_pol_Rpb2_45"/>
    <property type="match status" value="1"/>
</dbReference>
<dbReference type="Pfam" id="PF00562">
    <property type="entry name" value="RNA_pol_Rpb2_6"/>
    <property type="match status" value="1"/>
</dbReference>
<dbReference type="Pfam" id="PF04560">
    <property type="entry name" value="RNA_pol_Rpb2_7"/>
    <property type="match status" value="1"/>
</dbReference>
<dbReference type="SUPFAM" id="SSF64484">
    <property type="entry name" value="beta and beta-prime subunits of DNA dependent RNA-polymerase"/>
    <property type="match status" value="1"/>
</dbReference>
<dbReference type="PROSITE" id="PS01166">
    <property type="entry name" value="RNA_POL_BETA"/>
    <property type="match status" value="1"/>
</dbReference>
<organism>
    <name type="scientific">Lawsonia intracellularis (strain PHE/MN1-00)</name>
    <dbReference type="NCBI Taxonomy" id="363253"/>
    <lineage>
        <taxon>Bacteria</taxon>
        <taxon>Pseudomonadati</taxon>
        <taxon>Thermodesulfobacteriota</taxon>
        <taxon>Desulfovibrionia</taxon>
        <taxon>Desulfovibrionales</taxon>
        <taxon>Desulfovibrionaceae</taxon>
        <taxon>Lawsonia</taxon>
    </lineage>
</organism>
<accession>Q1MPW8</accession>
<evidence type="ECO:0000255" key="1">
    <source>
        <dbReference type="HAMAP-Rule" id="MF_01321"/>
    </source>
</evidence>
<name>RPOB_LAWIP</name>
<reference key="1">
    <citation type="submission" date="2005-11" db="EMBL/GenBank/DDBJ databases">
        <title>The complete genome sequence of Lawsonia intracellularis: the causative agent of proliferative enteropathy.</title>
        <authorList>
            <person name="Kaur K."/>
            <person name="Zhang Q."/>
            <person name="Beckler D."/>
            <person name="Munir S."/>
            <person name="Li L."/>
            <person name="Kinsley K."/>
            <person name="Herron L."/>
            <person name="Peterson A."/>
            <person name="May B."/>
            <person name="Singh S."/>
            <person name="Gebhart C."/>
            <person name="Kapur V."/>
        </authorList>
    </citation>
    <scope>NUCLEOTIDE SEQUENCE [LARGE SCALE GENOMIC DNA]</scope>
    <source>
        <strain>PHE/MN1-00</strain>
    </source>
</reference>
<feature type="chain" id="PRO_0000300337" description="DNA-directed RNA polymerase subunit beta">
    <location>
        <begin position="1"/>
        <end position="1373"/>
    </location>
</feature>
<gene>
    <name evidence="1" type="primary">rpoB</name>
    <name type="ordered locus">LI0905</name>
</gene>
<sequence length="1373" mass="153863">MVQLTKQFGKIKVEVPIPHLLNLQVDSYKKFLQEGLLEPLPEEGLESVFRSVFPIEDFNRTSSLEFVNYKIGEPKYDQAECIAKGLTYEAPIRIKVRLIIYDVDSDTESRTVHDIKEQDIYFGTLPLMTEKGTFIINGTERVIVNQLQRSPGIIFEHDSGKTHASRKVLYSCRIIPMRGSWLDFDFDHKDILYVRIDRRRKMPATILLKAMGMGKQDILNFFYKKETYILDNDGRIKWKFDPSLFRKDIAYTDILDNDNNLLVAAGKTITKRVWRQMEASGLEAFEVDPSTVIGQFLAEDIIDTSTGEILAESAEEITEGLIQTFRDAGITTFTVLHTRGNDTSSSIRDTLVQDKIPTTEKAQEEIYRRLRPSSPPTPEIAASFFDNLFRNNSYYDLSPVGRYKLNQRLDNYENATLRTLSDNDILEAIKLLTHLKDSHGPADDIDHLGNRRVRLVGELVENQYRIGLVRMERAIKERMSIQEVATLMPHDLINPKPVAALLKEFFGTSQLSQFMDQTNSLSEVTHKRRLSALGPGGLTRERAGFEVRDVHVSHYGRICPIETPEGPNIGLIVSLTTYAKVNDYGFIETPYRVVRNGYVTDEIIHLDASCEFSEVIAQANASIDSEGRLIDDYVTTRARGDVLMSAREEVTLMDISPSQMVSISAALIPFLEHDDANRALMGSNMQRQAVPLLRSERPLVGTGMEVDVAHDSGSCILAEGDGIIRYADANRIIVSYDDPNLYPEFGGVRAYDLLKYHKSNQNFCFGQRPSCIPGQIVKKGEVLADGPAIRDGGLALGKNLVVAFMPWCGYNFEDSILISERVVKEDTYTSVHIEEFEIVARDTKLGPEEITRDIPNVGEEMLSNLDENGIIRIGAAVKPEDILVGKITPKGETQLTPEEKLLRAIFGDKARDVKNTSLKVPPGIEGTVIDVKVFNRRSGEKDDRTRLIEDYEISLMDSKEQNYIKSITQRMKEKILPLINGKQLGTTILGKGKGEVLAEENSAITPELLDSLPLKKLEGAFKSKELNETITEMLSQYEKQINYIKTIYDSKRGKVTEGDDLPPGVIRMVKVHIAVKRKLAVGDKMAGRHGNKGVVSCILPEEDMPFFADGSPVDIVLNPLGVPSRMNIGQIMETHLGWAAKELGQQLNNMVEQGVAIQSLREQVKSVFESPEISAEIDAMDDDTFRTSVQKLKKGIITMTPVFDGAGESEVWDWLAKAGLPSDGKAILYDGRTGEAFKNRVTTGVMYILKLHHLVDEKIHARSTGPYSLVTQQPLGGKAQFGGQRLGEMEVWALEAYGASYLLQEFLTVKSDDVSGRVKMYEKIVKGDNFLEAGLPESFNVLVKELMSLGLNVTLHQEEGKKKPKRTGLIDKE</sequence>
<protein>
    <recommendedName>
        <fullName evidence="1">DNA-directed RNA polymerase subunit beta</fullName>
        <shortName evidence="1">RNAP subunit beta</shortName>
        <ecNumber evidence="1">2.7.7.6</ecNumber>
    </recommendedName>
    <alternativeName>
        <fullName evidence="1">RNA polymerase subunit beta</fullName>
    </alternativeName>
    <alternativeName>
        <fullName evidence="1">Transcriptase subunit beta</fullName>
    </alternativeName>
</protein>
<proteinExistence type="inferred from homology"/>
<keyword id="KW-0240">DNA-directed RNA polymerase</keyword>
<keyword id="KW-0548">Nucleotidyltransferase</keyword>
<keyword id="KW-1185">Reference proteome</keyword>
<keyword id="KW-0804">Transcription</keyword>
<keyword id="KW-0808">Transferase</keyword>
<comment type="function">
    <text evidence="1">DNA-dependent RNA polymerase catalyzes the transcription of DNA into RNA using the four ribonucleoside triphosphates as substrates.</text>
</comment>
<comment type="catalytic activity">
    <reaction evidence="1">
        <text>RNA(n) + a ribonucleoside 5'-triphosphate = RNA(n+1) + diphosphate</text>
        <dbReference type="Rhea" id="RHEA:21248"/>
        <dbReference type="Rhea" id="RHEA-COMP:14527"/>
        <dbReference type="Rhea" id="RHEA-COMP:17342"/>
        <dbReference type="ChEBI" id="CHEBI:33019"/>
        <dbReference type="ChEBI" id="CHEBI:61557"/>
        <dbReference type="ChEBI" id="CHEBI:140395"/>
        <dbReference type="EC" id="2.7.7.6"/>
    </reaction>
</comment>
<comment type="subunit">
    <text evidence="1">The RNAP catalytic core consists of 2 alpha, 1 beta, 1 beta' and 1 omega subunit. When a sigma factor is associated with the core the holoenzyme is formed, which can initiate transcription.</text>
</comment>
<comment type="similarity">
    <text evidence="1">Belongs to the RNA polymerase beta chain family.</text>
</comment>